<keyword id="KW-0963">Cytoplasm</keyword>
<keyword id="KW-0378">Hydrolase</keyword>
<keyword id="KW-1185">Reference proteome</keyword>
<protein>
    <recommendedName>
        <fullName evidence="1">Urease subunit beta</fullName>
        <ecNumber evidence="1">3.5.1.5</ecNumber>
    </recommendedName>
    <alternativeName>
        <fullName evidence="1">Urea amidohydrolase subunit beta</fullName>
    </alternativeName>
</protein>
<reference key="1">
    <citation type="journal article" date="2010" name="ISME J.">
        <title>The complete genome sequence of the algal symbiont Dinoroseobacter shibae: a hitchhiker's guide to life in the sea.</title>
        <authorList>
            <person name="Wagner-Dobler I."/>
            <person name="Ballhausen B."/>
            <person name="Berger M."/>
            <person name="Brinkhoff T."/>
            <person name="Buchholz I."/>
            <person name="Bunk B."/>
            <person name="Cypionka H."/>
            <person name="Daniel R."/>
            <person name="Drepper T."/>
            <person name="Gerdts G."/>
            <person name="Hahnke S."/>
            <person name="Han C."/>
            <person name="Jahn D."/>
            <person name="Kalhoefer D."/>
            <person name="Kiss H."/>
            <person name="Klenk H.P."/>
            <person name="Kyrpides N."/>
            <person name="Liebl W."/>
            <person name="Liesegang H."/>
            <person name="Meincke L."/>
            <person name="Pati A."/>
            <person name="Petersen J."/>
            <person name="Piekarski T."/>
            <person name="Pommerenke C."/>
            <person name="Pradella S."/>
            <person name="Pukall R."/>
            <person name="Rabus R."/>
            <person name="Stackebrandt E."/>
            <person name="Thole S."/>
            <person name="Thompson L."/>
            <person name="Tielen P."/>
            <person name="Tomasch J."/>
            <person name="von Jan M."/>
            <person name="Wanphrut N."/>
            <person name="Wichels A."/>
            <person name="Zech H."/>
            <person name="Simon M."/>
        </authorList>
    </citation>
    <scope>NUCLEOTIDE SEQUENCE [LARGE SCALE GENOMIC DNA]</scope>
    <source>
        <strain>DSM 16493 / NCIMB 14021 / DFL 12</strain>
    </source>
</reference>
<sequence>MIPGEIMAAPGDITLNAGATPLTLTVSNTGDRPVQVGSHYHFAETNAGLSFDRDAARGMRLDIAAGTAVRFEPGQTRDITLVPFGGARKIYGFNQGIMGAL</sequence>
<proteinExistence type="inferred from homology"/>
<dbReference type="EC" id="3.5.1.5" evidence="1"/>
<dbReference type="EMBL" id="CP000830">
    <property type="protein sequence ID" value="ABV94104.1"/>
    <property type="molecule type" value="Genomic_DNA"/>
</dbReference>
<dbReference type="RefSeq" id="WP_012179035.1">
    <property type="nucleotide sequence ID" value="NC_009952.1"/>
</dbReference>
<dbReference type="SMR" id="A8LRS3"/>
<dbReference type="STRING" id="398580.Dshi_2368"/>
<dbReference type="KEGG" id="dsh:Dshi_2368"/>
<dbReference type="eggNOG" id="COG0832">
    <property type="taxonomic scope" value="Bacteria"/>
</dbReference>
<dbReference type="HOGENOM" id="CLU_129707_1_1_5"/>
<dbReference type="OrthoDB" id="9797217at2"/>
<dbReference type="UniPathway" id="UPA00258">
    <property type="reaction ID" value="UER00370"/>
</dbReference>
<dbReference type="Proteomes" id="UP000006833">
    <property type="component" value="Chromosome"/>
</dbReference>
<dbReference type="GO" id="GO:0035550">
    <property type="term" value="C:urease complex"/>
    <property type="evidence" value="ECO:0007669"/>
    <property type="project" value="InterPro"/>
</dbReference>
<dbReference type="GO" id="GO:0009039">
    <property type="term" value="F:urease activity"/>
    <property type="evidence" value="ECO:0007669"/>
    <property type="project" value="UniProtKB-UniRule"/>
</dbReference>
<dbReference type="GO" id="GO:0043419">
    <property type="term" value="P:urea catabolic process"/>
    <property type="evidence" value="ECO:0007669"/>
    <property type="project" value="UniProtKB-UniRule"/>
</dbReference>
<dbReference type="CDD" id="cd00407">
    <property type="entry name" value="Urease_beta"/>
    <property type="match status" value="1"/>
</dbReference>
<dbReference type="FunFam" id="2.10.150.10:FF:000001">
    <property type="entry name" value="Urease subunit beta"/>
    <property type="match status" value="1"/>
</dbReference>
<dbReference type="Gene3D" id="2.10.150.10">
    <property type="entry name" value="Urease, beta subunit"/>
    <property type="match status" value="1"/>
</dbReference>
<dbReference type="HAMAP" id="MF_01954">
    <property type="entry name" value="Urease_beta"/>
    <property type="match status" value="1"/>
</dbReference>
<dbReference type="InterPro" id="IPR002019">
    <property type="entry name" value="Urease_beta-like"/>
</dbReference>
<dbReference type="InterPro" id="IPR036461">
    <property type="entry name" value="Urease_betasu_sf"/>
</dbReference>
<dbReference type="InterPro" id="IPR050069">
    <property type="entry name" value="Urease_subunit"/>
</dbReference>
<dbReference type="NCBIfam" id="NF009682">
    <property type="entry name" value="PRK13203.1"/>
    <property type="match status" value="1"/>
</dbReference>
<dbReference type="NCBIfam" id="TIGR00192">
    <property type="entry name" value="urease_beta"/>
    <property type="match status" value="1"/>
</dbReference>
<dbReference type="PANTHER" id="PTHR33569">
    <property type="entry name" value="UREASE"/>
    <property type="match status" value="1"/>
</dbReference>
<dbReference type="PANTHER" id="PTHR33569:SF1">
    <property type="entry name" value="UREASE"/>
    <property type="match status" value="1"/>
</dbReference>
<dbReference type="Pfam" id="PF00699">
    <property type="entry name" value="Urease_beta"/>
    <property type="match status" value="1"/>
</dbReference>
<dbReference type="SUPFAM" id="SSF51278">
    <property type="entry name" value="Urease, beta-subunit"/>
    <property type="match status" value="1"/>
</dbReference>
<organism>
    <name type="scientific">Dinoroseobacter shibae (strain DSM 16493 / NCIMB 14021 / DFL 12)</name>
    <dbReference type="NCBI Taxonomy" id="398580"/>
    <lineage>
        <taxon>Bacteria</taxon>
        <taxon>Pseudomonadati</taxon>
        <taxon>Pseudomonadota</taxon>
        <taxon>Alphaproteobacteria</taxon>
        <taxon>Rhodobacterales</taxon>
        <taxon>Roseobacteraceae</taxon>
        <taxon>Dinoroseobacter</taxon>
    </lineage>
</organism>
<evidence type="ECO:0000255" key="1">
    <source>
        <dbReference type="HAMAP-Rule" id="MF_01954"/>
    </source>
</evidence>
<name>URE2_DINSH</name>
<accession>A8LRS3</accession>
<comment type="catalytic activity">
    <reaction evidence="1">
        <text>urea + 2 H2O + H(+) = hydrogencarbonate + 2 NH4(+)</text>
        <dbReference type="Rhea" id="RHEA:20557"/>
        <dbReference type="ChEBI" id="CHEBI:15377"/>
        <dbReference type="ChEBI" id="CHEBI:15378"/>
        <dbReference type="ChEBI" id="CHEBI:16199"/>
        <dbReference type="ChEBI" id="CHEBI:17544"/>
        <dbReference type="ChEBI" id="CHEBI:28938"/>
        <dbReference type="EC" id="3.5.1.5"/>
    </reaction>
</comment>
<comment type="pathway">
    <text evidence="1">Nitrogen metabolism; urea degradation; CO(2) and NH(3) from urea (urease route): step 1/1.</text>
</comment>
<comment type="subunit">
    <text evidence="1">Heterotrimer of UreA (gamma), UreB (beta) and UreC (alpha) subunits. Three heterotrimers associate to form the active enzyme.</text>
</comment>
<comment type="subcellular location">
    <subcellularLocation>
        <location evidence="1">Cytoplasm</location>
    </subcellularLocation>
</comment>
<comment type="similarity">
    <text evidence="1">Belongs to the urease beta subunit family.</text>
</comment>
<feature type="chain" id="PRO_1000088504" description="Urease subunit beta">
    <location>
        <begin position="1"/>
        <end position="101"/>
    </location>
</feature>
<gene>
    <name evidence="1" type="primary">ureB</name>
    <name type="ordered locus">Dshi_2368</name>
</gene>